<keyword id="KW-0028">Amino-acid biosynthesis</keyword>
<keyword id="KW-0368">Histidine biosynthesis</keyword>
<keyword id="KW-0378">Hydrolase</keyword>
<keyword id="KW-0486">Methionine biosynthesis</keyword>
<keyword id="KW-0511">Multifunctional enzyme</keyword>
<keyword id="KW-0521">NADP</keyword>
<keyword id="KW-0554">One-carbon metabolism</keyword>
<keyword id="KW-0560">Oxidoreductase</keyword>
<keyword id="KW-0658">Purine biosynthesis</keyword>
<keyword id="KW-1185">Reference proteome</keyword>
<organism>
    <name type="scientific">Synechococcus sp. (strain WH7803)</name>
    <dbReference type="NCBI Taxonomy" id="32051"/>
    <lineage>
        <taxon>Bacteria</taxon>
        <taxon>Bacillati</taxon>
        <taxon>Cyanobacteriota</taxon>
        <taxon>Cyanophyceae</taxon>
        <taxon>Synechococcales</taxon>
        <taxon>Synechococcaceae</taxon>
        <taxon>Synechococcus</taxon>
    </lineage>
</organism>
<feature type="chain" id="PRO_0000305890" description="Bifunctional protein FolD">
    <location>
        <begin position="1"/>
        <end position="293"/>
    </location>
</feature>
<feature type="binding site" evidence="1">
    <location>
        <begin position="165"/>
        <end position="167"/>
    </location>
    <ligand>
        <name>NADP(+)</name>
        <dbReference type="ChEBI" id="CHEBI:58349"/>
    </ligand>
</feature>
<feature type="binding site" evidence="1">
    <location>
        <position position="190"/>
    </location>
    <ligand>
        <name>NADP(+)</name>
        <dbReference type="ChEBI" id="CHEBI:58349"/>
    </ligand>
</feature>
<feature type="binding site" evidence="1">
    <location>
        <position position="231"/>
    </location>
    <ligand>
        <name>NADP(+)</name>
        <dbReference type="ChEBI" id="CHEBI:58349"/>
    </ligand>
</feature>
<evidence type="ECO:0000255" key="1">
    <source>
        <dbReference type="HAMAP-Rule" id="MF_01576"/>
    </source>
</evidence>
<name>FOLD_SYNPW</name>
<gene>
    <name evidence="1" type="primary">folD</name>
    <name type="ordered locus">SynWH7803_1570</name>
</gene>
<proteinExistence type="inferred from homology"/>
<reference key="1">
    <citation type="submission" date="2006-05" db="EMBL/GenBank/DDBJ databases">
        <authorList>
            <consortium name="Genoscope"/>
        </authorList>
    </citation>
    <scope>NUCLEOTIDE SEQUENCE [LARGE SCALE GENOMIC DNA]</scope>
    <source>
        <strain>WH7803</strain>
    </source>
</reference>
<accession>A5GM31</accession>
<dbReference type="EC" id="1.5.1.5" evidence="1"/>
<dbReference type="EC" id="3.5.4.9" evidence="1"/>
<dbReference type="EMBL" id="CT971583">
    <property type="protein sequence ID" value="CAK23996.1"/>
    <property type="molecule type" value="Genomic_DNA"/>
</dbReference>
<dbReference type="SMR" id="A5GM31"/>
<dbReference type="STRING" id="32051.SynWH7803_1570"/>
<dbReference type="KEGG" id="syx:SynWH7803_1570"/>
<dbReference type="eggNOG" id="COG0190">
    <property type="taxonomic scope" value="Bacteria"/>
</dbReference>
<dbReference type="HOGENOM" id="CLU_034045_2_1_3"/>
<dbReference type="OrthoDB" id="9803580at2"/>
<dbReference type="UniPathway" id="UPA00193"/>
<dbReference type="Proteomes" id="UP000001566">
    <property type="component" value="Chromosome"/>
</dbReference>
<dbReference type="GO" id="GO:0005829">
    <property type="term" value="C:cytosol"/>
    <property type="evidence" value="ECO:0007669"/>
    <property type="project" value="TreeGrafter"/>
</dbReference>
<dbReference type="GO" id="GO:0004477">
    <property type="term" value="F:methenyltetrahydrofolate cyclohydrolase activity"/>
    <property type="evidence" value="ECO:0007669"/>
    <property type="project" value="UniProtKB-UniRule"/>
</dbReference>
<dbReference type="GO" id="GO:0004488">
    <property type="term" value="F:methylenetetrahydrofolate dehydrogenase (NADP+) activity"/>
    <property type="evidence" value="ECO:0007669"/>
    <property type="project" value="UniProtKB-UniRule"/>
</dbReference>
<dbReference type="GO" id="GO:0000105">
    <property type="term" value="P:L-histidine biosynthetic process"/>
    <property type="evidence" value="ECO:0007669"/>
    <property type="project" value="UniProtKB-KW"/>
</dbReference>
<dbReference type="GO" id="GO:0009086">
    <property type="term" value="P:methionine biosynthetic process"/>
    <property type="evidence" value="ECO:0007669"/>
    <property type="project" value="UniProtKB-KW"/>
</dbReference>
<dbReference type="GO" id="GO:0006164">
    <property type="term" value="P:purine nucleotide biosynthetic process"/>
    <property type="evidence" value="ECO:0007669"/>
    <property type="project" value="UniProtKB-KW"/>
</dbReference>
<dbReference type="GO" id="GO:0035999">
    <property type="term" value="P:tetrahydrofolate interconversion"/>
    <property type="evidence" value="ECO:0007669"/>
    <property type="project" value="UniProtKB-UniRule"/>
</dbReference>
<dbReference type="CDD" id="cd01080">
    <property type="entry name" value="NAD_bind_m-THF_DH_Cyclohyd"/>
    <property type="match status" value="1"/>
</dbReference>
<dbReference type="FunFam" id="3.40.50.720:FF:000006">
    <property type="entry name" value="Bifunctional protein FolD"/>
    <property type="match status" value="1"/>
</dbReference>
<dbReference type="FunFam" id="3.40.50.10860:FF:000005">
    <property type="entry name" value="C-1-tetrahydrofolate synthase, cytoplasmic, putative"/>
    <property type="match status" value="1"/>
</dbReference>
<dbReference type="Gene3D" id="3.40.50.10860">
    <property type="entry name" value="Leucine Dehydrogenase, chain A, domain 1"/>
    <property type="match status" value="1"/>
</dbReference>
<dbReference type="Gene3D" id="3.40.50.720">
    <property type="entry name" value="NAD(P)-binding Rossmann-like Domain"/>
    <property type="match status" value="1"/>
</dbReference>
<dbReference type="HAMAP" id="MF_01576">
    <property type="entry name" value="THF_DHG_CYH"/>
    <property type="match status" value="1"/>
</dbReference>
<dbReference type="InterPro" id="IPR046346">
    <property type="entry name" value="Aminoacid_DH-like_N_sf"/>
</dbReference>
<dbReference type="InterPro" id="IPR036291">
    <property type="entry name" value="NAD(P)-bd_dom_sf"/>
</dbReference>
<dbReference type="InterPro" id="IPR000672">
    <property type="entry name" value="THF_DH/CycHdrlase"/>
</dbReference>
<dbReference type="InterPro" id="IPR020630">
    <property type="entry name" value="THF_DH/CycHdrlase_cat_dom"/>
</dbReference>
<dbReference type="InterPro" id="IPR020867">
    <property type="entry name" value="THF_DH/CycHdrlase_CS"/>
</dbReference>
<dbReference type="InterPro" id="IPR020631">
    <property type="entry name" value="THF_DH/CycHdrlase_NAD-bd_dom"/>
</dbReference>
<dbReference type="NCBIfam" id="NF010783">
    <property type="entry name" value="PRK14186.1"/>
    <property type="match status" value="1"/>
</dbReference>
<dbReference type="PANTHER" id="PTHR48099:SF5">
    <property type="entry name" value="C-1-TETRAHYDROFOLATE SYNTHASE, CYTOPLASMIC"/>
    <property type="match status" value="1"/>
</dbReference>
<dbReference type="PANTHER" id="PTHR48099">
    <property type="entry name" value="C-1-TETRAHYDROFOLATE SYNTHASE, CYTOPLASMIC-RELATED"/>
    <property type="match status" value="1"/>
</dbReference>
<dbReference type="Pfam" id="PF00763">
    <property type="entry name" value="THF_DHG_CYH"/>
    <property type="match status" value="1"/>
</dbReference>
<dbReference type="Pfam" id="PF02882">
    <property type="entry name" value="THF_DHG_CYH_C"/>
    <property type="match status" value="1"/>
</dbReference>
<dbReference type="PRINTS" id="PR00085">
    <property type="entry name" value="THFDHDRGNASE"/>
</dbReference>
<dbReference type="SUPFAM" id="SSF53223">
    <property type="entry name" value="Aminoacid dehydrogenase-like, N-terminal domain"/>
    <property type="match status" value="1"/>
</dbReference>
<dbReference type="SUPFAM" id="SSF51735">
    <property type="entry name" value="NAD(P)-binding Rossmann-fold domains"/>
    <property type="match status" value="1"/>
</dbReference>
<dbReference type="PROSITE" id="PS00767">
    <property type="entry name" value="THF_DHG_CYH_2"/>
    <property type="match status" value="1"/>
</dbReference>
<sequence>MALRLDGKALAKELEQRLAQQVRSGCAKAGRPPGLAVLRVGDDPASAVYVANKEKACARVGVESFGAHLPASSQPETLLKTIQALNADERVDGILLQLPLPAGLDETPLLAAIDPDKDADGLHTLNLGRLLKGEPGPRSCTPAGVMAMLRSQGIDPSGKRAVVVGRSILVGQPMALMLQAANATVMVAHSRTRDLAALTRQADILVVAAGRPEMIGAEHVAPGAVVVDVGIHRRPEGGLCGDVNAAELEPLAAALSPVPGGVGPMTVTMLLVNTVLAWSRRHQLDHDLADLVP</sequence>
<protein>
    <recommendedName>
        <fullName evidence="1">Bifunctional protein FolD</fullName>
    </recommendedName>
    <domain>
        <recommendedName>
            <fullName evidence="1">Methylenetetrahydrofolate dehydrogenase</fullName>
            <ecNumber evidence="1">1.5.1.5</ecNumber>
        </recommendedName>
    </domain>
    <domain>
        <recommendedName>
            <fullName evidence="1">Methenyltetrahydrofolate cyclohydrolase</fullName>
            <ecNumber evidence="1">3.5.4.9</ecNumber>
        </recommendedName>
    </domain>
</protein>
<comment type="function">
    <text evidence="1">Catalyzes the oxidation of 5,10-methylenetetrahydrofolate to 5,10-methenyltetrahydrofolate and then the hydrolysis of 5,10-methenyltetrahydrofolate to 10-formyltetrahydrofolate.</text>
</comment>
<comment type="catalytic activity">
    <reaction evidence="1">
        <text>(6R)-5,10-methylene-5,6,7,8-tetrahydrofolate + NADP(+) = (6R)-5,10-methenyltetrahydrofolate + NADPH</text>
        <dbReference type="Rhea" id="RHEA:22812"/>
        <dbReference type="ChEBI" id="CHEBI:15636"/>
        <dbReference type="ChEBI" id="CHEBI:57455"/>
        <dbReference type="ChEBI" id="CHEBI:57783"/>
        <dbReference type="ChEBI" id="CHEBI:58349"/>
        <dbReference type="EC" id="1.5.1.5"/>
    </reaction>
</comment>
<comment type="catalytic activity">
    <reaction evidence="1">
        <text>(6R)-5,10-methenyltetrahydrofolate + H2O = (6R)-10-formyltetrahydrofolate + H(+)</text>
        <dbReference type="Rhea" id="RHEA:23700"/>
        <dbReference type="ChEBI" id="CHEBI:15377"/>
        <dbReference type="ChEBI" id="CHEBI:15378"/>
        <dbReference type="ChEBI" id="CHEBI:57455"/>
        <dbReference type="ChEBI" id="CHEBI:195366"/>
        <dbReference type="EC" id="3.5.4.9"/>
    </reaction>
</comment>
<comment type="pathway">
    <text evidence="1">One-carbon metabolism; tetrahydrofolate interconversion.</text>
</comment>
<comment type="subunit">
    <text evidence="1">Homodimer.</text>
</comment>
<comment type="similarity">
    <text evidence="1">Belongs to the tetrahydrofolate dehydrogenase/cyclohydrolase family.</text>
</comment>